<keyword id="KW-0235">DNA replication</keyword>
<keyword id="KW-0240">DNA-directed RNA polymerase</keyword>
<keyword id="KW-0271">Exosome</keyword>
<keyword id="KW-0460">Magnesium</keyword>
<keyword id="KW-0479">Metal-binding</keyword>
<keyword id="KW-0548">Nucleotidyltransferase</keyword>
<keyword id="KW-0639">Primosome</keyword>
<keyword id="KW-1185">Reference proteome</keyword>
<keyword id="KW-0804">Transcription</keyword>
<keyword id="KW-0808">Transferase</keyword>
<gene>
    <name evidence="1" type="primary">dnaG</name>
    <name type="ordered locus">MK0617</name>
</gene>
<reference key="1">
    <citation type="journal article" date="2002" name="Proc. Natl. Acad. Sci. U.S.A.">
        <title>The complete genome of hyperthermophile Methanopyrus kandleri AV19 and monophyly of archaeal methanogens.</title>
        <authorList>
            <person name="Slesarev A.I."/>
            <person name="Mezhevaya K.V."/>
            <person name="Makarova K.S."/>
            <person name="Polushin N.N."/>
            <person name="Shcherbinina O.V."/>
            <person name="Shakhova V.V."/>
            <person name="Belova G.I."/>
            <person name="Aravind L."/>
            <person name="Natale D.A."/>
            <person name="Rogozin I.B."/>
            <person name="Tatusov R.L."/>
            <person name="Wolf Y.I."/>
            <person name="Stetter K.O."/>
            <person name="Malykh A.G."/>
            <person name="Koonin E.V."/>
            <person name="Kozyavkin S.A."/>
        </authorList>
    </citation>
    <scope>NUCLEOTIDE SEQUENCE [LARGE SCALE GENOMIC DNA]</scope>
    <source>
        <strain>AV19 / DSM 6324 / JCM 9639 / NBRC 100938</strain>
    </source>
</reference>
<evidence type="ECO:0000255" key="1">
    <source>
        <dbReference type="HAMAP-Rule" id="MF_00007"/>
    </source>
</evidence>
<evidence type="ECO:0000256" key="2">
    <source>
        <dbReference type="SAM" id="MobiDB-lite"/>
    </source>
</evidence>
<protein>
    <recommendedName>
        <fullName evidence="1">DNA primase DnaG</fullName>
        <ecNumber evidence="1">2.7.7.101</ecNumber>
    </recommendedName>
</protein>
<organism>
    <name type="scientific">Methanopyrus kandleri (strain AV19 / DSM 6324 / JCM 9639 / NBRC 100938)</name>
    <dbReference type="NCBI Taxonomy" id="190192"/>
    <lineage>
        <taxon>Archaea</taxon>
        <taxon>Methanobacteriati</taxon>
        <taxon>Methanobacteriota</taxon>
        <taxon>Methanomada group</taxon>
        <taxon>Methanopyri</taxon>
        <taxon>Methanopyrales</taxon>
        <taxon>Methanopyraceae</taxon>
        <taxon>Methanopyrus</taxon>
    </lineage>
</organism>
<dbReference type="EC" id="2.7.7.101" evidence="1"/>
<dbReference type="EMBL" id="AE009439">
    <property type="protein sequence ID" value="AAM01832.1"/>
    <property type="molecule type" value="Genomic_DNA"/>
</dbReference>
<dbReference type="RefSeq" id="WP_011018987.1">
    <property type="nucleotide sequence ID" value="NC_003551.1"/>
</dbReference>
<dbReference type="SMR" id="Q8TXP3"/>
<dbReference type="FunCoup" id="Q8TXP3">
    <property type="interactions" value="12"/>
</dbReference>
<dbReference type="STRING" id="190192.MK0617"/>
<dbReference type="PaxDb" id="190192-MK0617"/>
<dbReference type="EnsemblBacteria" id="AAM01832">
    <property type="protein sequence ID" value="AAM01832"/>
    <property type="gene ID" value="MK0617"/>
</dbReference>
<dbReference type="GeneID" id="1476718"/>
<dbReference type="KEGG" id="mka:MK0617"/>
<dbReference type="PATRIC" id="fig|190192.8.peg.654"/>
<dbReference type="HOGENOM" id="CLU_034626_0_0_2"/>
<dbReference type="InParanoid" id="Q8TXP3"/>
<dbReference type="OrthoDB" id="8643at2157"/>
<dbReference type="Proteomes" id="UP000001826">
    <property type="component" value="Chromosome"/>
</dbReference>
<dbReference type="GO" id="GO:0005737">
    <property type="term" value="C:cytoplasm"/>
    <property type="evidence" value="ECO:0007669"/>
    <property type="project" value="TreeGrafter"/>
</dbReference>
<dbReference type="GO" id="GO:0000428">
    <property type="term" value="C:DNA-directed RNA polymerase complex"/>
    <property type="evidence" value="ECO:0007669"/>
    <property type="project" value="UniProtKB-KW"/>
</dbReference>
<dbReference type="GO" id="GO:0000178">
    <property type="term" value="C:exosome (RNase complex)"/>
    <property type="evidence" value="ECO:0007669"/>
    <property type="project" value="UniProtKB-KW"/>
</dbReference>
<dbReference type="GO" id="GO:1990077">
    <property type="term" value="C:primosome complex"/>
    <property type="evidence" value="ECO:0007669"/>
    <property type="project" value="UniProtKB-KW"/>
</dbReference>
<dbReference type="GO" id="GO:0003899">
    <property type="term" value="F:DNA-directed RNA polymerase activity"/>
    <property type="evidence" value="ECO:0007669"/>
    <property type="project" value="InterPro"/>
</dbReference>
<dbReference type="GO" id="GO:0046872">
    <property type="term" value="F:metal ion binding"/>
    <property type="evidence" value="ECO:0007669"/>
    <property type="project" value="UniProtKB-KW"/>
</dbReference>
<dbReference type="GO" id="GO:0008143">
    <property type="term" value="F:poly(A) binding"/>
    <property type="evidence" value="ECO:0007669"/>
    <property type="project" value="InterPro"/>
</dbReference>
<dbReference type="GO" id="GO:0006269">
    <property type="term" value="P:DNA replication, synthesis of primer"/>
    <property type="evidence" value="ECO:0007669"/>
    <property type="project" value="UniProtKB-UniRule"/>
</dbReference>
<dbReference type="CDD" id="cd01029">
    <property type="entry name" value="TOPRIM_primases"/>
    <property type="match status" value="1"/>
</dbReference>
<dbReference type="FunFam" id="3.40.1360.10:FF:000010">
    <property type="entry name" value="DNA primase DnaG"/>
    <property type="match status" value="1"/>
</dbReference>
<dbReference type="Gene3D" id="3.40.1360.10">
    <property type="match status" value="1"/>
</dbReference>
<dbReference type="HAMAP" id="MF_00007">
    <property type="entry name" value="DNA_primase_DnaG_arc"/>
    <property type="match status" value="1"/>
</dbReference>
<dbReference type="InterPro" id="IPR050219">
    <property type="entry name" value="DnaG_primase"/>
</dbReference>
<dbReference type="InterPro" id="IPR020607">
    <property type="entry name" value="Primase_DnaG_arc"/>
</dbReference>
<dbReference type="InterPro" id="IPR034154">
    <property type="entry name" value="TOPRIM_DnaG/twinkle"/>
</dbReference>
<dbReference type="InterPro" id="IPR006171">
    <property type="entry name" value="TOPRIM_dom"/>
</dbReference>
<dbReference type="NCBIfam" id="NF003108">
    <property type="entry name" value="PRK04031.1-1"/>
    <property type="match status" value="1"/>
</dbReference>
<dbReference type="PANTHER" id="PTHR30313">
    <property type="entry name" value="DNA PRIMASE"/>
    <property type="match status" value="1"/>
</dbReference>
<dbReference type="PANTHER" id="PTHR30313:SF2">
    <property type="entry name" value="DNA PRIMASE"/>
    <property type="match status" value="1"/>
</dbReference>
<dbReference type="Pfam" id="PF13662">
    <property type="entry name" value="Toprim_4"/>
    <property type="match status" value="1"/>
</dbReference>
<dbReference type="SMART" id="SM00493">
    <property type="entry name" value="TOPRIM"/>
    <property type="match status" value="1"/>
</dbReference>
<dbReference type="SUPFAM" id="SSF56731">
    <property type="entry name" value="DNA primase core"/>
    <property type="match status" value="1"/>
</dbReference>
<dbReference type="PROSITE" id="PS50880">
    <property type="entry name" value="TOPRIM"/>
    <property type="match status" value="1"/>
</dbReference>
<accession>Q8TXP3</accession>
<name>DNAG_METKA</name>
<feature type="chain" id="PRO_0000240457" description="DNA primase DnaG">
    <location>
        <begin position="1"/>
        <end position="409"/>
    </location>
</feature>
<feature type="domain" description="Toprim" evidence="1">
    <location>
        <begin position="175"/>
        <end position="261"/>
    </location>
</feature>
<feature type="region of interest" description="Disordered" evidence="2">
    <location>
        <begin position="280"/>
        <end position="322"/>
    </location>
</feature>
<feature type="compositionally biased region" description="Basic and acidic residues" evidence="2">
    <location>
        <begin position="280"/>
        <end position="289"/>
    </location>
</feature>
<feature type="compositionally biased region" description="Basic residues" evidence="2">
    <location>
        <begin position="290"/>
        <end position="314"/>
    </location>
</feature>
<feature type="binding site" evidence="1">
    <location>
        <position position="181"/>
    </location>
    <ligand>
        <name>Mg(2+)</name>
        <dbReference type="ChEBI" id="CHEBI:18420"/>
        <label>1</label>
        <note>catalytic</note>
    </ligand>
</feature>
<feature type="binding site" evidence="1">
    <location>
        <position position="223"/>
    </location>
    <ligand>
        <name>Mg(2+)</name>
        <dbReference type="ChEBI" id="CHEBI:18420"/>
        <label>1</label>
        <note>catalytic</note>
    </ligand>
</feature>
<feature type="binding site" evidence="1">
    <location>
        <position position="223"/>
    </location>
    <ligand>
        <name>Mg(2+)</name>
        <dbReference type="ChEBI" id="CHEBI:18420"/>
        <label>2</label>
    </ligand>
</feature>
<feature type="binding site" evidence="1">
    <location>
        <position position="225"/>
    </location>
    <ligand>
        <name>Mg(2+)</name>
        <dbReference type="ChEBI" id="CHEBI:18420"/>
        <label>2</label>
    </ligand>
</feature>
<comment type="function">
    <text evidence="1">RNA polymerase that catalyzes the synthesis of short RNA molecules used as primers for DNA polymerase during DNA replication. Also part of the exosome, which is a complex involved in RNA degradation. Acts as a poly(A)-binding protein that enhances the interaction between heteromeric, adenine-rich transcripts and the exosome.</text>
</comment>
<comment type="catalytic activity">
    <reaction evidence="1">
        <text>ssDNA + n NTP = ssDNA/pppN(pN)n-1 hybrid + (n-1) diphosphate.</text>
        <dbReference type="EC" id="2.7.7.101"/>
    </reaction>
</comment>
<comment type="cofactor">
    <cofactor evidence="1">
        <name>Mg(2+)</name>
        <dbReference type="ChEBI" id="CHEBI:18420"/>
    </cofactor>
    <text evidence="1">Binds two Mg(2+) per subunit.</text>
</comment>
<comment type="subunit">
    <text evidence="1">Forms a ternary complex with MCM helicase and DNA. Component of the archaeal exosome complex.</text>
</comment>
<comment type="similarity">
    <text evidence="1">Belongs to the archaeal DnaG primase family.</text>
</comment>
<proteinExistence type="inferred from homology"/>
<sequence>MSKGRTDYGNGAVKYVIRAKLRANGYVERPDVVGAIFGQTEGLLGDDLDLRRLLKTGRIGRIDVKLRNENGKTVGEIIVPSSLDRVETALVAAALEQVDRIGPCRAEVEVVSIDDIRKEKRERMIRRAREILREMVSEVTPDSSELVQKVKEAVEDVEVEEYKGLPAGPNVEDSDAIIVVEGRADVANLLRCGIKNVIAVEGTNVPEAIVELSKEKTVTAFVDGDRGGELILKELLQVADVDYVAKAPKGKEVEELTRKEIKRALERKVPVEEYLKEIGERPKDKEREKGKKPKPKKRPERRGRPRKKKARPKRGPQERRLLDRLKRLKGTFRAEFLDEGLKPVKEVELDELVEKLKSEDGVRAVVLDGVITRRLVEAAREKGVKYVVGVKEGDLDPEIKKDVKIITMS</sequence>